<gene>
    <name type="primary">OCA1</name>
    <name type="ordered locus">KLLA0C13343g</name>
</gene>
<name>OCA1_KLULA</name>
<organism>
    <name type="scientific">Kluyveromyces lactis (strain ATCC 8585 / CBS 2359 / DSM 70799 / NBRC 1267 / NRRL Y-1140 / WM37)</name>
    <name type="common">Yeast</name>
    <name type="synonym">Candida sphaerica</name>
    <dbReference type="NCBI Taxonomy" id="284590"/>
    <lineage>
        <taxon>Eukaryota</taxon>
        <taxon>Fungi</taxon>
        <taxon>Dikarya</taxon>
        <taxon>Ascomycota</taxon>
        <taxon>Saccharomycotina</taxon>
        <taxon>Saccharomycetes</taxon>
        <taxon>Saccharomycetales</taxon>
        <taxon>Saccharomycetaceae</taxon>
        <taxon>Kluyveromyces</taxon>
    </lineage>
</organism>
<reference key="1">
    <citation type="journal article" date="2004" name="Nature">
        <title>Genome evolution in yeasts.</title>
        <authorList>
            <person name="Dujon B."/>
            <person name="Sherman D."/>
            <person name="Fischer G."/>
            <person name="Durrens P."/>
            <person name="Casaregola S."/>
            <person name="Lafontaine I."/>
            <person name="de Montigny J."/>
            <person name="Marck C."/>
            <person name="Neuveglise C."/>
            <person name="Talla E."/>
            <person name="Goffard N."/>
            <person name="Frangeul L."/>
            <person name="Aigle M."/>
            <person name="Anthouard V."/>
            <person name="Babour A."/>
            <person name="Barbe V."/>
            <person name="Barnay S."/>
            <person name="Blanchin S."/>
            <person name="Beckerich J.-M."/>
            <person name="Beyne E."/>
            <person name="Bleykasten C."/>
            <person name="Boisrame A."/>
            <person name="Boyer J."/>
            <person name="Cattolico L."/>
            <person name="Confanioleri F."/>
            <person name="de Daruvar A."/>
            <person name="Despons L."/>
            <person name="Fabre E."/>
            <person name="Fairhead C."/>
            <person name="Ferry-Dumazet H."/>
            <person name="Groppi A."/>
            <person name="Hantraye F."/>
            <person name="Hennequin C."/>
            <person name="Jauniaux N."/>
            <person name="Joyet P."/>
            <person name="Kachouri R."/>
            <person name="Kerrest A."/>
            <person name="Koszul R."/>
            <person name="Lemaire M."/>
            <person name="Lesur I."/>
            <person name="Ma L."/>
            <person name="Muller H."/>
            <person name="Nicaud J.-M."/>
            <person name="Nikolski M."/>
            <person name="Oztas S."/>
            <person name="Ozier-Kalogeropoulos O."/>
            <person name="Pellenz S."/>
            <person name="Potier S."/>
            <person name="Richard G.-F."/>
            <person name="Straub M.-L."/>
            <person name="Suleau A."/>
            <person name="Swennen D."/>
            <person name="Tekaia F."/>
            <person name="Wesolowski-Louvel M."/>
            <person name="Westhof E."/>
            <person name="Wirth B."/>
            <person name="Zeniou-Meyer M."/>
            <person name="Zivanovic Y."/>
            <person name="Bolotin-Fukuhara M."/>
            <person name="Thierry A."/>
            <person name="Bouchier C."/>
            <person name="Caudron B."/>
            <person name="Scarpelli C."/>
            <person name="Gaillardin C."/>
            <person name="Weissenbach J."/>
            <person name="Wincker P."/>
            <person name="Souciet J.-L."/>
        </authorList>
    </citation>
    <scope>NUCLEOTIDE SEQUENCE [LARGE SCALE GENOMIC DNA]</scope>
    <source>
        <strain>ATCC 8585 / CBS 2359 / DSM 70799 / NBRC 1267 / NRRL Y-1140 / WM37</strain>
    </source>
</reference>
<evidence type="ECO:0000250" key="1"/>
<evidence type="ECO:0000255" key="2">
    <source>
        <dbReference type="PROSITE-ProRule" id="PRU00160"/>
    </source>
</evidence>
<evidence type="ECO:0000305" key="3"/>
<feature type="chain" id="PRO_0000333392" description="Putative tyrosine-protein phosphatase OCA1">
    <location>
        <begin position="1"/>
        <end position="210"/>
    </location>
</feature>
<feature type="domain" description="Tyrosine-protein phosphatase" evidence="2">
    <location>
        <begin position="44"/>
        <end position="204"/>
    </location>
</feature>
<feature type="active site" description="Phosphocysteine intermediate" evidence="2">
    <location>
        <position position="140"/>
    </location>
</feature>
<dbReference type="EC" id="3.1.3.48"/>
<dbReference type="EMBL" id="CR382123">
    <property type="protein sequence ID" value="CAH01646.1"/>
    <property type="molecule type" value="Genomic_DNA"/>
</dbReference>
<dbReference type="RefSeq" id="XP_452795.1">
    <property type="nucleotide sequence ID" value="XM_452795.1"/>
</dbReference>
<dbReference type="SMR" id="Q6CTE4"/>
<dbReference type="FunCoup" id="Q6CTE4">
    <property type="interactions" value="52"/>
</dbReference>
<dbReference type="STRING" id="284590.Q6CTE4"/>
<dbReference type="PaxDb" id="284590-Q6CTE4"/>
<dbReference type="KEGG" id="kla:KLLA0_C13343g"/>
<dbReference type="eggNOG" id="KOG1572">
    <property type="taxonomic scope" value="Eukaryota"/>
</dbReference>
<dbReference type="HOGENOM" id="CLU_047845_2_2_1"/>
<dbReference type="InParanoid" id="Q6CTE4"/>
<dbReference type="OMA" id="PWNPISE"/>
<dbReference type="Proteomes" id="UP000000598">
    <property type="component" value="Chromosome C"/>
</dbReference>
<dbReference type="GO" id="GO:0005737">
    <property type="term" value="C:cytoplasm"/>
    <property type="evidence" value="ECO:0007669"/>
    <property type="project" value="UniProtKB-SubCell"/>
</dbReference>
<dbReference type="GO" id="GO:0004725">
    <property type="term" value="F:protein tyrosine phosphatase activity"/>
    <property type="evidence" value="ECO:0007669"/>
    <property type="project" value="UniProtKB-EC"/>
</dbReference>
<dbReference type="CDD" id="cd14531">
    <property type="entry name" value="PFA-DSP_Oca1"/>
    <property type="match status" value="1"/>
</dbReference>
<dbReference type="FunFam" id="3.90.190.10:FF:000035">
    <property type="entry name" value="Tyrosine phosphatase, putative"/>
    <property type="match status" value="1"/>
</dbReference>
<dbReference type="Gene3D" id="3.90.190.10">
    <property type="entry name" value="Protein tyrosine phosphatase superfamily"/>
    <property type="match status" value="1"/>
</dbReference>
<dbReference type="InterPro" id="IPR020428">
    <property type="entry name" value="PFA-DSPs"/>
</dbReference>
<dbReference type="InterPro" id="IPR029021">
    <property type="entry name" value="Prot-tyrosine_phosphatase-like"/>
</dbReference>
<dbReference type="InterPro" id="IPR004861">
    <property type="entry name" value="Siw14-like"/>
</dbReference>
<dbReference type="InterPro" id="IPR020422">
    <property type="entry name" value="TYR_PHOSPHATASE_DUAL_dom"/>
</dbReference>
<dbReference type="PANTHER" id="PTHR31126">
    <property type="entry name" value="TYROSINE-PROTEIN PHOSPHATASE"/>
    <property type="match status" value="1"/>
</dbReference>
<dbReference type="PANTHER" id="PTHR31126:SF8">
    <property type="entry name" value="TYROSINE-PROTEIN PHOSPHATASE OCA1-RELATED"/>
    <property type="match status" value="1"/>
</dbReference>
<dbReference type="Pfam" id="PF03162">
    <property type="entry name" value="Y_phosphatase2"/>
    <property type="match status" value="1"/>
</dbReference>
<dbReference type="PRINTS" id="PR01911">
    <property type="entry name" value="PFDSPHPHTASE"/>
</dbReference>
<dbReference type="SUPFAM" id="SSF52799">
    <property type="entry name" value="(Phosphotyrosine protein) phosphatases II"/>
    <property type="match status" value="1"/>
</dbReference>
<dbReference type="PROSITE" id="PS50054">
    <property type="entry name" value="TYR_PHOSPHATASE_DUAL"/>
    <property type="match status" value="1"/>
</dbReference>
<comment type="function">
    <text evidence="1">Putative tyrosine-protein phosphatase required for protection against superoxide stress.</text>
</comment>
<comment type="catalytic activity">
    <reaction>
        <text>O-phospho-L-tyrosyl-[protein] + H2O = L-tyrosyl-[protein] + phosphate</text>
        <dbReference type="Rhea" id="RHEA:10684"/>
        <dbReference type="Rhea" id="RHEA-COMP:10136"/>
        <dbReference type="Rhea" id="RHEA-COMP:20101"/>
        <dbReference type="ChEBI" id="CHEBI:15377"/>
        <dbReference type="ChEBI" id="CHEBI:43474"/>
        <dbReference type="ChEBI" id="CHEBI:46858"/>
        <dbReference type="ChEBI" id="CHEBI:61978"/>
        <dbReference type="EC" id="3.1.3.48"/>
    </reaction>
</comment>
<comment type="subcellular location">
    <subcellularLocation>
        <location evidence="1">Cytoplasm</location>
    </subcellularLocation>
</comment>
<comment type="similarity">
    <text evidence="3">Belongs to the protein-tyrosine phosphatase family.</text>
</comment>
<protein>
    <recommendedName>
        <fullName>Putative tyrosine-protein phosphatase OCA1</fullName>
        <ecNumber>3.1.3.48</ecNumber>
    </recommendedName>
</protein>
<proteinExistence type="inferred from homology"/>
<sequence>MSAIDNYQDEEEDDIVCVNEEIETGHPRVTILHPPNERIVPPLNFCPVERYLYRSGQPSNVNFPFLLNLKLKTIIWLANEEPQDALLEFCDDHNIQLQFAAINPDGGEDDNPWDGLTEHSIRNALHTIVNSESYPLLVCCGMGRHRTGTVIGCLRRLMGWNLASVSEEYRRFTGSRGGRILVELLIEAFDITSVEIDREKAPNWLLTALS</sequence>
<accession>Q6CTE4</accession>
<keyword id="KW-0963">Cytoplasm</keyword>
<keyword id="KW-0378">Hydrolase</keyword>
<keyword id="KW-0904">Protein phosphatase</keyword>
<keyword id="KW-1185">Reference proteome</keyword>
<keyword id="KW-0346">Stress response</keyword>